<reference key="1">
    <citation type="journal article" date="2002" name="Science">
        <title>50 million years of genomic stasis in endosymbiotic bacteria.</title>
        <authorList>
            <person name="Tamas I."/>
            <person name="Klasson L."/>
            <person name="Canbaeck B."/>
            <person name="Naeslund A.K."/>
            <person name="Eriksson A.-S."/>
            <person name="Wernegreen J.J."/>
            <person name="Sandstroem J.P."/>
            <person name="Moran N.A."/>
            <person name="Andersson S.G.E."/>
        </authorList>
    </citation>
    <scope>NUCLEOTIDE SEQUENCE [LARGE SCALE GENOMIC DNA]</scope>
    <source>
        <strain>Sg</strain>
    </source>
</reference>
<proteinExistence type="inferred from homology"/>
<comment type="similarity">
    <text evidence="1">Belongs to the UPF0162 family.</text>
</comment>
<dbReference type="EMBL" id="AE013218">
    <property type="protein sequence ID" value="AAM67734.1"/>
    <property type="molecule type" value="Genomic_DNA"/>
</dbReference>
<dbReference type="RefSeq" id="WP_011053701.1">
    <property type="nucleotide sequence ID" value="NC_004061.1"/>
</dbReference>
<dbReference type="SMR" id="Q8K9W8"/>
<dbReference type="STRING" id="198804.BUsg_167"/>
<dbReference type="GeneID" id="93003636"/>
<dbReference type="KEGG" id="bas:BUsg_167"/>
<dbReference type="eggNOG" id="COG2912">
    <property type="taxonomic scope" value="Bacteria"/>
</dbReference>
<dbReference type="HOGENOM" id="CLU_063810_0_0_6"/>
<dbReference type="Proteomes" id="UP000000416">
    <property type="component" value="Chromosome"/>
</dbReference>
<dbReference type="InterPro" id="IPR032698">
    <property type="entry name" value="SirB1_N"/>
</dbReference>
<dbReference type="NCBIfam" id="NF008188">
    <property type="entry name" value="PRK10941.1"/>
    <property type="match status" value="1"/>
</dbReference>
<dbReference type="Pfam" id="PF13371">
    <property type="entry name" value="TPR_9"/>
    <property type="match status" value="1"/>
</dbReference>
<dbReference type="Pfam" id="PF13369">
    <property type="entry name" value="Transglut_core2"/>
    <property type="match status" value="1"/>
</dbReference>
<gene>
    <name type="ordered locus">BUsg_167</name>
</gene>
<accession>Q8K9W8</accession>
<name>Y167_BUCAP</name>
<protein>
    <recommendedName>
        <fullName>UPF0162 protein BUsg_167</fullName>
    </recommendedName>
</protein>
<feature type="chain" id="PRO_0000202382" description="UPF0162 protein BUsg_167">
    <location>
        <begin position="1"/>
        <end position="269"/>
    </location>
</feature>
<organism>
    <name type="scientific">Buchnera aphidicola subsp. Schizaphis graminum (strain Sg)</name>
    <dbReference type="NCBI Taxonomy" id="198804"/>
    <lineage>
        <taxon>Bacteria</taxon>
        <taxon>Pseudomonadati</taxon>
        <taxon>Pseudomonadota</taxon>
        <taxon>Gammaproteobacteria</taxon>
        <taxon>Enterobacterales</taxon>
        <taxon>Erwiniaceae</taxon>
        <taxon>Buchnera</taxon>
    </lineage>
</organism>
<evidence type="ECO:0000305" key="1"/>
<sequence>MKSFSNIDFSKLSLIDSIIATSQIIREDFPTKFVISDLYNKVKEAKFYISSEIEPNLKLKKLLKLFYKTWNFGAASGIYKLSDVLWIDNVLKTRQGTAVSLGILFLHIAQELKLPLNPVVFPTQLILRADWINKKKWLINPFNGEMLDQHTLEVWLKGNISPTAELYEHDLYKAESITVIRKMLDILKSALMEEKKMELALNVSNLLLQINPNDPYEIRDRGLIYANLECNHVALTDLIYFVEHCPEDPISEIIKVQIHAIEQKKMILH</sequence>